<name>YCIB_KLEP3</name>
<accession>B5XT16</accession>
<protein>
    <recommendedName>
        <fullName evidence="1">Inner membrane-spanning protein YciB</fullName>
    </recommendedName>
</protein>
<gene>
    <name evidence="1" type="primary">yciB</name>
    <name type="ordered locus">KPK_3196</name>
</gene>
<sequence>MKQFLDFLPLVVFFAFYKLYDIYAATTALIVATAIVLIYSWVRYRKVEKMALITFVLVAVFGGLTLFFHNDEFIKWKVTVIYALFAGALLFSQWVMKKPLIQRMLGKELALPQQVWSRLNLAWAVFFILCGLANIYIAFWLPQNIWVNFKVFGLTALTLVFTLLSGIYIYRHMPQDDHH</sequence>
<comment type="function">
    <text evidence="1">Plays a role in cell envelope biogenesis, maintenance of cell envelope integrity and membrane homeostasis.</text>
</comment>
<comment type="subcellular location">
    <subcellularLocation>
        <location evidence="1">Cell inner membrane</location>
        <topology evidence="1">Multi-pass membrane protein</topology>
    </subcellularLocation>
</comment>
<comment type="similarity">
    <text evidence="1">Belongs to the YciB family.</text>
</comment>
<feature type="chain" id="PRO_1000098885" description="Inner membrane-spanning protein YciB">
    <location>
        <begin position="1"/>
        <end position="179"/>
    </location>
</feature>
<feature type="transmembrane region" description="Helical" evidence="1">
    <location>
        <begin position="22"/>
        <end position="42"/>
    </location>
</feature>
<feature type="transmembrane region" description="Helical" evidence="1">
    <location>
        <begin position="50"/>
        <end position="70"/>
    </location>
</feature>
<feature type="transmembrane region" description="Helical" evidence="1">
    <location>
        <begin position="76"/>
        <end position="96"/>
    </location>
</feature>
<feature type="transmembrane region" description="Helical" evidence="1">
    <location>
        <begin position="121"/>
        <end position="141"/>
    </location>
</feature>
<feature type="transmembrane region" description="Helical" evidence="1">
    <location>
        <begin position="149"/>
        <end position="169"/>
    </location>
</feature>
<keyword id="KW-0997">Cell inner membrane</keyword>
<keyword id="KW-1003">Cell membrane</keyword>
<keyword id="KW-0472">Membrane</keyword>
<keyword id="KW-0812">Transmembrane</keyword>
<keyword id="KW-1133">Transmembrane helix</keyword>
<organism>
    <name type="scientific">Klebsiella pneumoniae (strain 342)</name>
    <dbReference type="NCBI Taxonomy" id="507522"/>
    <lineage>
        <taxon>Bacteria</taxon>
        <taxon>Pseudomonadati</taxon>
        <taxon>Pseudomonadota</taxon>
        <taxon>Gammaproteobacteria</taxon>
        <taxon>Enterobacterales</taxon>
        <taxon>Enterobacteriaceae</taxon>
        <taxon>Klebsiella/Raoultella group</taxon>
        <taxon>Klebsiella</taxon>
        <taxon>Klebsiella pneumoniae complex</taxon>
    </lineage>
</organism>
<proteinExistence type="inferred from homology"/>
<dbReference type="EMBL" id="CP000964">
    <property type="protein sequence ID" value="ACI08662.1"/>
    <property type="molecule type" value="Genomic_DNA"/>
</dbReference>
<dbReference type="KEGG" id="kpe:KPK_3196"/>
<dbReference type="HOGENOM" id="CLU_089554_2_0_6"/>
<dbReference type="BioCyc" id="KPNE507522:GI0B-3182-MONOMER"/>
<dbReference type="Proteomes" id="UP000001734">
    <property type="component" value="Chromosome"/>
</dbReference>
<dbReference type="GO" id="GO:0005886">
    <property type="term" value="C:plasma membrane"/>
    <property type="evidence" value="ECO:0007669"/>
    <property type="project" value="UniProtKB-SubCell"/>
</dbReference>
<dbReference type="HAMAP" id="MF_00189">
    <property type="entry name" value="YciB"/>
    <property type="match status" value="1"/>
</dbReference>
<dbReference type="InterPro" id="IPR006008">
    <property type="entry name" value="YciB"/>
</dbReference>
<dbReference type="NCBIfam" id="TIGR00997">
    <property type="entry name" value="ispZ"/>
    <property type="match status" value="1"/>
</dbReference>
<dbReference type="NCBIfam" id="NF001324">
    <property type="entry name" value="PRK00259.1-2"/>
    <property type="match status" value="1"/>
</dbReference>
<dbReference type="NCBIfam" id="NF001325">
    <property type="entry name" value="PRK00259.1-3"/>
    <property type="match status" value="1"/>
</dbReference>
<dbReference type="NCBIfam" id="NF001326">
    <property type="entry name" value="PRK00259.1-4"/>
    <property type="match status" value="1"/>
</dbReference>
<dbReference type="PANTHER" id="PTHR36917:SF1">
    <property type="entry name" value="INNER MEMBRANE-SPANNING PROTEIN YCIB"/>
    <property type="match status" value="1"/>
</dbReference>
<dbReference type="PANTHER" id="PTHR36917">
    <property type="entry name" value="INTRACELLULAR SEPTATION PROTEIN A-RELATED"/>
    <property type="match status" value="1"/>
</dbReference>
<dbReference type="Pfam" id="PF04279">
    <property type="entry name" value="IspA"/>
    <property type="match status" value="1"/>
</dbReference>
<reference key="1">
    <citation type="journal article" date="2008" name="PLoS Genet.">
        <title>Complete genome sequence of the N2-fixing broad host range endophyte Klebsiella pneumoniae 342 and virulence predictions verified in mice.</title>
        <authorList>
            <person name="Fouts D.E."/>
            <person name="Tyler H.L."/>
            <person name="DeBoy R.T."/>
            <person name="Daugherty S."/>
            <person name="Ren Q."/>
            <person name="Badger J.H."/>
            <person name="Durkin A.S."/>
            <person name="Huot H."/>
            <person name="Shrivastava S."/>
            <person name="Kothari S."/>
            <person name="Dodson R.J."/>
            <person name="Mohamoud Y."/>
            <person name="Khouri H."/>
            <person name="Roesch L.F.W."/>
            <person name="Krogfelt K.A."/>
            <person name="Struve C."/>
            <person name="Triplett E.W."/>
            <person name="Methe B.A."/>
        </authorList>
    </citation>
    <scope>NUCLEOTIDE SEQUENCE [LARGE SCALE GENOMIC DNA]</scope>
    <source>
        <strain>342</strain>
    </source>
</reference>
<evidence type="ECO:0000255" key="1">
    <source>
        <dbReference type="HAMAP-Rule" id="MF_00189"/>
    </source>
</evidence>